<name>P358_HALSA</name>
<reference evidence="2" key="1">
    <citation type="journal article" date="2000" name="Proc. Natl. Acad. Sci. U.S.A.">
        <title>Genome sequence of Halobacterium species NRC-1.</title>
        <authorList>
            <person name="Ng W.V."/>
            <person name="Kennedy S.P."/>
            <person name="Mahairas G.G."/>
            <person name="Berquist B."/>
            <person name="Pan M."/>
            <person name="Shukla H.D."/>
            <person name="Lasky S.R."/>
            <person name="Baliga N.S."/>
            <person name="Thorsson V."/>
            <person name="Sbrogna J."/>
            <person name="Swartzell S."/>
            <person name="Weir D."/>
            <person name="Hall J."/>
            <person name="Dahl T.A."/>
            <person name="Welti R."/>
            <person name="Goo Y.A."/>
            <person name="Leithauser B."/>
            <person name="Keller K."/>
            <person name="Cruz R."/>
            <person name="Danson M.J."/>
            <person name="Hough D.W."/>
            <person name="Maddocks D.G."/>
            <person name="Jablonski P.E."/>
            <person name="Krebs M.P."/>
            <person name="Angevine C.M."/>
            <person name="Dale H."/>
            <person name="Isenbarger T.A."/>
            <person name="Peck R.F."/>
            <person name="Pohlschroder M."/>
            <person name="Spudich J.L."/>
            <person name="Jung K.-H."/>
            <person name="Alam M."/>
            <person name="Freitas T."/>
            <person name="Hou S."/>
            <person name="Daniels C.J."/>
            <person name="Dennis P.P."/>
            <person name="Omer A.D."/>
            <person name="Ebhardt H."/>
            <person name="Lowe T.M."/>
            <person name="Liang P."/>
            <person name="Riley M."/>
            <person name="Hood L."/>
            <person name="DasSarma S."/>
        </authorList>
    </citation>
    <scope>NUCLEOTIDE SEQUENCE [LARGE SCALE GENOMIC DNA]</scope>
    <source>
        <strain>ATCC 700922 / JCM 11081 / NRC-1</strain>
    </source>
</reference>
<reference evidence="2" key="2">
    <citation type="submission" date="2005-10" db="UniProtKB">
        <authorList>
            <person name="Ng W.V."/>
        </authorList>
    </citation>
    <scope>PROTEIN SEQUENCE OF 2-19</scope>
    <scope>MASS SPECTROMETRY</scope>
    <source>
        <strain>ATCC 700922 / JCM 11081 / NRC-1</strain>
    </source>
</reference>
<gene>
    <name type="ordered locus">VNG_0358C</name>
</gene>
<proteinExistence type="evidence at protein level"/>
<dbReference type="EMBL" id="AE004437">
    <property type="status" value="NOT_ANNOTATED_CDS"/>
    <property type="molecule type" value="Genomic_DNA"/>
</dbReference>
<dbReference type="RefSeq" id="WP_012289142.1">
    <property type="nucleotide sequence ID" value="NC_002607.1"/>
</dbReference>
<dbReference type="SMR" id="P84699"/>
<dbReference type="InParanoid" id="P84699"/>
<dbReference type="OrthoDB" id="195084at2157"/>
<dbReference type="Proteomes" id="UP000000554">
    <property type="component" value="Chromosome"/>
</dbReference>
<dbReference type="InterPro" id="IPR043899">
    <property type="entry name" value="DUF5789"/>
</dbReference>
<dbReference type="Pfam" id="PF19102">
    <property type="entry name" value="DUF5789"/>
    <property type="match status" value="1"/>
</dbReference>
<evidence type="ECO:0000269" key="1">
    <source ref="2"/>
</evidence>
<evidence type="ECO:0000305" key="2"/>
<accession>P84699</accession>
<protein>
    <recommendedName>
        <fullName>Protein VNG_0358C</fullName>
    </recommendedName>
</protein>
<sequence>MSDDNDEDAPAVELGEGARVAGAPIARVASRLTWALQKSEVVRKEGDTVVRTPDGPRDLDAVLEDVSTPYFETRREFERDVRAAMGAGPVPTE</sequence>
<keyword id="KW-0903">Direct protein sequencing</keyword>
<keyword id="KW-1185">Reference proteome</keyword>
<comment type="mass spectrometry"/>
<feature type="chain" id="PRO_0000058138" description="Protein VNG_0358C">
    <location>
        <begin position="1"/>
        <end position="93"/>
    </location>
</feature>
<organism>
    <name type="scientific">Halobacterium salinarum (strain ATCC 700922 / JCM 11081 / NRC-1)</name>
    <name type="common">Halobacterium halobium</name>
    <dbReference type="NCBI Taxonomy" id="64091"/>
    <lineage>
        <taxon>Archaea</taxon>
        <taxon>Methanobacteriati</taxon>
        <taxon>Methanobacteriota</taxon>
        <taxon>Stenosarchaea group</taxon>
        <taxon>Halobacteria</taxon>
        <taxon>Halobacteriales</taxon>
        <taxon>Halobacteriaceae</taxon>
        <taxon>Halobacterium</taxon>
        <taxon>Halobacterium salinarum NRC-34001</taxon>
    </lineage>
</organism>